<reference key="1">
    <citation type="journal article" date="2011" name="J. Bacteriol.">
        <title>Comparative genomics of 28 Salmonella enterica isolates: evidence for CRISPR-mediated adaptive sublineage evolution.</title>
        <authorList>
            <person name="Fricke W.F."/>
            <person name="Mammel M.K."/>
            <person name="McDermott P.F."/>
            <person name="Tartera C."/>
            <person name="White D.G."/>
            <person name="Leclerc J.E."/>
            <person name="Ravel J."/>
            <person name="Cebula T.A."/>
        </authorList>
    </citation>
    <scope>NUCLEOTIDE SEQUENCE [LARGE SCALE GENOMIC DNA]</scope>
    <source>
        <strain>SL476</strain>
    </source>
</reference>
<feature type="chain" id="PRO_1000097884" description="Arginine repressor">
    <location>
        <begin position="1"/>
        <end position="156"/>
    </location>
</feature>
<protein>
    <recommendedName>
        <fullName evidence="1">Arginine repressor</fullName>
    </recommendedName>
</protein>
<gene>
    <name evidence="1" type="primary">argR</name>
    <name type="ordered locus">SeHA_C3658</name>
</gene>
<sequence>MRSSAKQEELVRAFKALLKEEKFSSQGEIVLALQDQGFENINQSKVSRMLTKFGAVRTRNAKMEMVYCLPAELGVPTTSSPLKNLVLDIDYNDAVVVIHTSPGAAQLIARLLDSLGKAEGILGTIAGDDTIFTTPASGFSVRDLYEAILELFEQEL</sequence>
<keyword id="KW-0028">Amino-acid biosynthesis</keyword>
<keyword id="KW-0055">Arginine biosynthesis</keyword>
<keyword id="KW-0963">Cytoplasm</keyword>
<keyword id="KW-0238">DNA-binding</keyword>
<keyword id="KW-0678">Repressor</keyword>
<keyword id="KW-0804">Transcription</keyword>
<keyword id="KW-0805">Transcription regulation</keyword>
<accession>B4TJT4</accession>
<organism>
    <name type="scientific">Salmonella heidelberg (strain SL476)</name>
    <dbReference type="NCBI Taxonomy" id="454169"/>
    <lineage>
        <taxon>Bacteria</taxon>
        <taxon>Pseudomonadati</taxon>
        <taxon>Pseudomonadota</taxon>
        <taxon>Gammaproteobacteria</taxon>
        <taxon>Enterobacterales</taxon>
        <taxon>Enterobacteriaceae</taxon>
        <taxon>Salmonella</taxon>
    </lineage>
</organism>
<comment type="function">
    <text evidence="1">Regulates arginine biosynthesis genes.</text>
</comment>
<comment type="pathway">
    <text>Amino-acid biosynthesis; L-arginine biosynthesis [regulation].</text>
</comment>
<comment type="subcellular location">
    <subcellularLocation>
        <location evidence="1">Cytoplasm</location>
    </subcellularLocation>
</comment>
<comment type="similarity">
    <text evidence="1">Belongs to the ArgR family.</text>
</comment>
<dbReference type="EMBL" id="CP001120">
    <property type="protein sequence ID" value="ACF66943.1"/>
    <property type="molecule type" value="Genomic_DNA"/>
</dbReference>
<dbReference type="RefSeq" id="WP_001257852.1">
    <property type="nucleotide sequence ID" value="NC_011083.1"/>
</dbReference>
<dbReference type="SMR" id="B4TJT4"/>
<dbReference type="KEGG" id="seh:SeHA_C3658"/>
<dbReference type="HOGENOM" id="CLU_097103_2_0_6"/>
<dbReference type="UniPathway" id="UPA00068"/>
<dbReference type="Proteomes" id="UP000001866">
    <property type="component" value="Chromosome"/>
</dbReference>
<dbReference type="GO" id="GO:0005737">
    <property type="term" value="C:cytoplasm"/>
    <property type="evidence" value="ECO:0007669"/>
    <property type="project" value="UniProtKB-SubCell"/>
</dbReference>
<dbReference type="GO" id="GO:0034618">
    <property type="term" value="F:arginine binding"/>
    <property type="evidence" value="ECO:0007669"/>
    <property type="project" value="InterPro"/>
</dbReference>
<dbReference type="GO" id="GO:0003677">
    <property type="term" value="F:DNA binding"/>
    <property type="evidence" value="ECO:0007669"/>
    <property type="project" value="UniProtKB-KW"/>
</dbReference>
<dbReference type="GO" id="GO:0003700">
    <property type="term" value="F:DNA-binding transcription factor activity"/>
    <property type="evidence" value="ECO:0007669"/>
    <property type="project" value="UniProtKB-UniRule"/>
</dbReference>
<dbReference type="GO" id="GO:0006526">
    <property type="term" value="P:L-arginine biosynthetic process"/>
    <property type="evidence" value="ECO:0007669"/>
    <property type="project" value="UniProtKB-UniPathway"/>
</dbReference>
<dbReference type="GO" id="GO:0051259">
    <property type="term" value="P:protein complex oligomerization"/>
    <property type="evidence" value="ECO:0007669"/>
    <property type="project" value="InterPro"/>
</dbReference>
<dbReference type="GO" id="GO:1900079">
    <property type="term" value="P:regulation of arginine biosynthetic process"/>
    <property type="evidence" value="ECO:0007669"/>
    <property type="project" value="UniProtKB-UniRule"/>
</dbReference>
<dbReference type="FunFam" id="1.10.10.10:FF:000074">
    <property type="entry name" value="Arginine repressor"/>
    <property type="match status" value="1"/>
</dbReference>
<dbReference type="FunFam" id="3.30.1360.40:FF:000004">
    <property type="entry name" value="Arginine repressor"/>
    <property type="match status" value="1"/>
</dbReference>
<dbReference type="Gene3D" id="3.30.1360.40">
    <property type="match status" value="1"/>
</dbReference>
<dbReference type="Gene3D" id="1.10.10.10">
    <property type="entry name" value="Winged helix-like DNA-binding domain superfamily/Winged helix DNA-binding domain"/>
    <property type="match status" value="1"/>
</dbReference>
<dbReference type="HAMAP" id="MF_00173">
    <property type="entry name" value="Arg_repressor"/>
    <property type="match status" value="1"/>
</dbReference>
<dbReference type="InterPro" id="IPR001669">
    <property type="entry name" value="Arg_repress"/>
</dbReference>
<dbReference type="InterPro" id="IPR020899">
    <property type="entry name" value="Arg_repress_C"/>
</dbReference>
<dbReference type="InterPro" id="IPR036251">
    <property type="entry name" value="Arg_repress_C_sf"/>
</dbReference>
<dbReference type="InterPro" id="IPR020900">
    <property type="entry name" value="Arg_repress_DNA-bd"/>
</dbReference>
<dbReference type="InterPro" id="IPR036388">
    <property type="entry name" value="WH-like_DNA-bd_sf"/>
</dbReference>
<dbReference type="InterPro" id="IPR036390">
    <property type="entry name" value="WH_DNA-bd_sf"/>
</dbReference>
<dbReference type="NCBIfam" id="TIGR01529">
    <property type="entry name" value="argR_whole"/>
    <property type="match status" value="1"/>
</dbReference>
<dbReference type="NCBIfam" id="NF003457">
    <property type="entry name" value="PRK05066.1"/>
    <property type="match status" value="1"/>
</dbReference>
<dbReference type="PANTHER" id="PTHR34471">
    <property type="entry name" value="ARGININE REPRESSOR"/>
    <property type="match status" value="1"/>
</dbReference>
<dbReference type="PANTHER" id="PTHR34471:SF1">
    <property type="entry name" value="ARGININE REPRESSOR"/>
    <property type="match status" value="1"/>
</dbReference>
<dbReference type="Pfam" id="PF01316">
    <property type="entry name" value="Arg_repressor"/>
    <property type="match status" value="1"/>
</dbReference>
<dbReference type="Pfam" id="PF02863">
    <property type="entry name" value="Arg_repressor_C"/>
    <property type="match status" value="1"/>
</dbReference>
<dbReference type="PRINTS" id="PR01467">
    <property type="entry name" value="ARGREPRESSOR"/>
</dbReference>
<dbReference type="SUPFAM" id="SSF55252">
    <property type="entry name" value="C-terminal domain of arginine repressor"/>
    <property type="match status" value="1"/>
</dbReference>
<dbReference type="SUPFAM" id="SSF46785">
    <property type="entry name" value="Winged helix' DNA-binding domain"/>
    <property type="match status" value="1"/>
</dbReference>
<evidence type="ECO:0000255" key="1">
    <source>
        <dbReference type="HAMAP-Rule" id="MF_00173"/>
    </source>
</evidence>
<name>ARGR_SALHS</name>
<proteinExistence type="inferred from homology"/>